<comment type="function">
    <text evidence="1">Catalyzes the pyruvoyl-dependent decarboxylation of aspartate to produce beta-alanine.</text>
</comment>
<comment type="catalytic activity">
    <reaction evidence="1">
        <text>L-aspartate + H(+) = beta-alanine + CO2</text>
        <dbReference type="Rhea" id="RHEA:19497"/>
        <dbReference type="ChEBI" id="CHEBI:15378"/>
        <dbReference type="ChEBI" id="CHEBI:16526"/>
        <dbReference type="ChEBI" id="CHEBI:29991"/>
        <dbReference type="ChEBI" id="CHEBI:57966"/>
        <dbReference type="EC" id="4.1.1.11"/>
    </reaction>
</comment>
<comment type="cofactor">
    <cofactor evidence="1">
        <name>pyruvate</name>
        <dbReference type="ChEBI" id="CHEBI:15361"/>
    </cofactor>
    <text evidence="1">Binds 1 pyruvoyl group covalently per subunit.</text>
</comment>
<comment type="pathway">
    <text evidence="1">Cofactor biosynthesis; (R)-pantothenate biosynthesis; beta-alanine from L-aspartate: step 1/1.</text>
</comment>
<comment type="subunit">
    <text evidence="1">Heterooctamer of four alpha and four beta subunits.</text>
</comment>
<comment type="subcellular location">
    <subcellularLocation>
        <location evidence="1">Cytoplasm</location>
    </subcellularLocation>
</comment>
<comment type="PTM">
    <text evidence="1">Is synthesized initially as an inactive proenzyme, which is activated by self-cleavage at a specific serine bond to produce a beta-subunit with a hydroxyl group at its C-terminus and an alpha-subunit with a pyruvoyl group at its N-terminus.</text>
</comment>
<comment type="similarity">
    <text evidence="1">Belongs to the PanD family.</text>
</comment>
<name>PAND_CAMHC</name>
<evidence type="ECO:0000255" key="1">
    <source>
        <dbReference type="HAMAP-Rule" id="MF_00446"/>
    </source>
</evidence>
<feature type="chain" id="PRO_1000026168" description="Aspartate 1-decarboxylase beta chain" evidence="1">
    <location>
        <begin position="1"/>
        <end position="24"/>
    </location>
</feature>
<feature type="chain" id="PRO_0000316059" description="Aspartate 1-decarboxylase alpha chain" evidence="1">
    <location>
        <begin position="25"/>
        <end position="114"/>
    </location>
</feature>
<feature type="active site" description="Schiff-base intermediate with substrate; via pyruvic acid" evidence="1">
    <location>
        <position position="25"/>
    </location>
</feature>
<feature type="active site" description="Proton donor" evidence="1">
    <location>
        <position position="58"/>
    </location>
</feature>
<feature type="binding site" evidence="1">
    <location>
        <position position="57"/>
    </location>
    <ligand>
        <name>substrate</name>
    </ligand>
</feature>
<feature type="binding site" evidence="1">
    <location>
        <begin position="71"/>
        <end position="73"/>
    </location>
    <ligand>
        <name>substrate</name>
    </ligand>
</feature>
<feature type="modified residue" description="Pyruvic acid (Ser)" evidence="1">
    <location>
        <position position="25"/>
    </location>
</feature>
<keyword id="KW-0068">Autocatalytic cleavage</keyword>
<keyword id="KW-0963">Cytoplasm</keyword>
<keyword id="KW-0210">Decarboxylase</keyword>
<keyword id="KW-0456">Lyase</keyword>
<keyword id="KW-0566">Pantothenate biosynthesis</keyword>
<keyword id="KW-0670">Pyruvate</keyword>
<keyword id="KW-1185">Reference proteome</keyword>
<keyword id="KW-0704">Schiff base</keyword>
<keyword id="KW-0865">Zymogen</keyword>
<dbReference type="EC" id="4.1.1.11" evidence="1"/>
<dbReference type="EMBL" id="CP000776">
    <property type="protein sequence ID" value="ABS51593.1"/>
    <property type="molecule type" value="Genomic_DNA"/>
</dbReference>
<dbReference type="RefSeq" id="WP_012108088.1">
    <property type="nucleotide sequence ID" value="NC_009714.1"/>
</dbReference>
<dbReference type="SMR" id="A7HZW6"/>
<dbReference type="STRING" id="360107.CHAB381_0199"/>
<dbReference type="KEGG" id="cha:CHAB381_0199"/>
<dbReference type="eggNOG" id="COG0853">
    <property type="taxonomic scope" value="Bacteria"/>
</dbReference>
<dbReference type="HOGENOM" id="CLU_115305_2_0_7"/>
<dbReference type="OrthoDB" id="9803983at2"/>
<dbReference type="UniPathway" id="UPA00028">
    <property type="reaction ID" value="UER00002"/>
</dbReference>
<dbReference type="Proteomes" id="UP000002407">
    <property type="component" value="Chromosome"/>
</dbReference>
<dbReference type="GO" id="GO:0005829">
    <property type="term" value="C:cytosol"/>
    <property type="evidence" value="ECO:0007669"/>
    <property type="project" value="TreeGrafter"/>
</dbReference>
<dbReference type="GO" id="GO:0004068">
    <property type="term" value="F:aspartate 1-decarboxylase activity"/>
    <property type="evidence" value="ECO:0007669"/>
    <property type="project" value="UniProtKB-UniRule"/>
</dbReference>
<dbReference type="GO" id="GO:0006523">
    <property type="term" value="P:alanine biosynthetic process"/>
    <property type="evidence" value="ECO:0007669"/>
    <property type="project" value="InterPro"/>
</dbReference>
<dbReference type="GO" id="GO:0015940">
    <property type="term" value="P:pantothenate biosynthetic process"/>
    <property type="evidence" value="ECO:0007669"/>
    <property type="project" value="UniProtKB-UniRule"/>
</dbReference>
<dbReference type="CDD" id="cd06919">
    <property type="entry name" value="Asp_decarbox"/>
    <property type="match status" value="1"/>
</dbReference>
<dbReference type="Gene3D" id="2.40.40.20">
    <property type="match status" value="1"/>
</dbReference>
<dbReference type="HAMAP" id="MF_00446">
    <property type="entry name" value="PanD"/>
    <property type="match status" value="1"/>
</dbReference>
<dbReference type="InterPro" id="IPR009010">
    <property type="entry name" value="Asp_de-COase-like_dom_sf"/>
</dbReference>
<dbReference type="InterPro" id="IPR003190">
    <property type="entry name" value="Asp_decarbox"/>
</dbReference>
<dbReference type="NCBIfam" id="TIGR00223">
    <property type="entry name" value="panD"/>
    <property type="match status" value="1"/>
</dbReference>
<dbReference type="PANTHER" id="PTHR21012">
    <property type="entry name" value="ASPARTATE 1-DECARBOXYLASE"/>
    <property type="match status" value="1"/>
</dbReference>
<dbReference type="PANTHER" id="PTHR21012:SF0">
    <property type="entry name" value="ASPARTATE 1-DECARBOXYLASE"/>
    <property type="match status" value="1"/>
</dbReference>
<dbReference type="Pfam" id="PF02261">
    <property type="entry name" value="Asp_decarbox"/>
    <property type="match status" value="1"/>
</dbReference>
<dbReference type="PIRSF" id="PIRSF006246">
    <property type="entry name" value="Asp_decarbox"/>
    <property type="match status" value="1"/>
</dbReference>
<dbReference type="SUPFAM" id="SSF50692">
    <property type="entry name" value="ADC-like"/>
    <property type="match status" value="1"/>
</dbReference>
<accession>A7HZW6</accession>
<protein>
    <recommendedName>
        <fullName evidence="1">Aspartate 1-decarboxylase</fullName>
        <ecNumber evidence="1">4.1.1.11</ecNumber>
    </recommendedName>
    <alternativeName>
        <fullName evidence="1">Aspartate alpha-decarboxylase</fullName>
    </alternativeName>
    <component>
        <recommendedName>
            <fullName evidence="1">Aspartate 1-decarboxylase beta chain</fullName>
        </recommendedName>
    </component>
    <component>
        <recommendedName>
            <fullName evidence="1">Aspartate 1-decarboxylase alpha chain</fullName>
        </recommendedName>
    </component>
</protein>
<sequence length="114" mass="12602">MTISMLQSKIHRATVTDANLNYVGSITIDEELIKKAGMLEFQKVDILDINNGERFSTYIIKGKKGEICLNGAAARKVCIGDLVIIVSYAQMSTDEALNFKPKIVHVNSKNEALE</sequence>
<organism>
    <name type="scientific">Campylobacter hominis (strain ATCC BAA-381 / DSM 21671 / CCUG 45161 / LMG 19568 / NCTC 13146 / CH001A)</name>
    <dbReference type="NCBI Taxonomy" id="360107"/>
    <lineage>
        <taxon>Bacteria</taxon>
        <taxon>Pseudomonadati</taxon>
        <taxon>Campylobacterota</taxon>
        <taxon>Epsilonproteobacteria</taxon>
        <taxon>Campylobacterales</taxon>
        <taxon>Campylobacteraceae</taxon>
        <taxon>Campylobacter</taxon>
    </lineage>
</organism>
<proteinExistence type="inferred from homology"/>
<gene>
    <name evidence="1" type="primary">panD</name>
    <name type="ordered locus">CHAB381_0199</name>
</gene>
<reference key="1">
    <citation type="submission" date="2007-07" db="EMBL/GenBank/DDBJ databases">
        <title>Complete genome sequence of Campylobacter hominis ATCC BAA-381, a commensal isolated from the human gastrointestinal tract.</title>
        <authorList>
            <person name="Fouts D.E."/>
            <person name="Mongodin E.F."/>
            <person name="Puiu D."/>
            <person name="Sebastian Y."/>
            <person name="Miller W.G."/>
            <person name="Mandrell R.E."/>
            <person name="Nelson K.E."/>
        </authorList>
    </citation>
    <scope>NUCLEOTIDE SEQUENCE [LARGE SCALE GENOMIC DNA]</scope>
    <source>
        <strain>ATCC BAA-381 / DSM 21671 / CCUG 45161 / LMG 19568 / NCTC 13146 / CH001A</strain>
    </source>
</reference>